<accession>Q0W5R8</accession>
<proteinExistence type="inferred from homology"/>
<protein>
    <recommendedName>
        <fullName evidence="1">Ribonuclease HII</fullName>
        <shortName evidence="1">RNase HII</shortName>
        <ecNumber evidence="1">3.1.26.4</ecNumber>
    </recommendedName>
</protein>
<feature type="chain" id="PRO_0000334988" description="Ribonuclease HII">
    <location>
        <begin position="1"/>
        <end position="224"/>
    </location>
</feature>
<feature type="domain" description="RNase H type-2" evidence="2">
    <location>
        <begin position="7"/>
        <end position="217"/>
    </location>
</feature>
<feature type="binding site" evidence="1">
    <location>
        <position position="13"/>
    </location>
    <ligand>
        <name>a divalent metal cation</name>
        <dbReference type="ChEBI" id="CHEBI:60240"/>
    </ligand>
</feature>
<feature type="binding site" evidence="1">
    <location>
        <position position="14"/>
    </location>
    <ligand>
        <name>a divalent metal cation</name>
        <dbReference type="ChEBI" id="CHEBI:60240"/>
    </ligand>
</feature>
<feature type="binding site" evidence="1">
    <location>
        <position position="111"/>
    </location>
    <ligand>
        <name>a divalent metal cation</name>
        <dbReference type="ChEBI" id="CHEBI:60240"/>
    </ligand>
</feature>
<sequence length="224" mass="24892">MAKKRTSTIMGIDEAGRGPVIGPLVVCGIIVEEKDLPAIEAMGLKDSKKLSAKKREEFAAALKNKYKYELSVLPPQEIDARFESEDNLNRLEVNCFAGLIRSAKPTIAYLDACDVNAERFGINIKKCLDFELEIVSAHEADSKYPIVSAASIIAKVHRDSLIREISEKMGEDVGSGYPADPVTISFLKNYYMKHKCLPDCARKSWKTSNAVIADCLQARLFQFE</sequence>
<name>RNH2_METAR</name>
<comment type="function">
    <text evidence="1">Endonuclease that specifically degrades the RNA of RNA-DNA hybrids.</text>
</comment>
<comment type="catalytic activity">
    <reaction evidence="1">
        <text>Endonucleolytic cleavage to 5'-phosphomonoester.</text>
        <dbReference type="EC" id="3.1.26.4"/>
    </reaction>
</comment>
<comment type="cofactor">
    <cofactor evidence="1">
        <name>Mn(2+)</name>
        <dbReference type="ChEBI" id="CHEBI:29035"/>
    </cofactor>
    <cofactor evidence="1">
        <name>Mg(2+)</name>
        <dbReference type="ChEBI" id="CHEBI:18420"/>
    </cofactor>
    <text evidence="1">Manganese or magnesium. Binds 1 divalent metal ion per monomer in the absence of substrate. May bind a second metal ion after substrate binding.</text>
</comment>
<comment type="subcellular location">
    <subcellularLocation>
        <location evidence="1">Cytoplasm</location>
    </subcellularLocation>
</comment>
<comment type="similarity">
    <text evidence="1">Belongs to the RNase HII family.</text>
</comment>
<keyword id="KW-0963">Cytoplasm</keyword>
<keyword id="KW-0255">Endonuclease</keyword>
<keyword id="KW-0378">Hydrolase</keyword>
<keyword id="KW-0464">Manganese</keyword>
<keyword id="KW-0479">Metal-binding</keyword>
<keyword id="KW-0540">Nuclease</keyword>
<keyword id="KW-1185">Reference proteome</keyword>
<gene>
    <name evidence="1" type="primary">rnhB</name>
    <name type="ordered locus">UNCMA_19200</name>
    <name type="ORF">RCIX928</name>
</gene>
<reference key="1">
    <citation type="journal article" date="2006" name="Science">
        <title>Genome of rice cluster I archaea -- the key methane producers in the rice rhizosphere.</title>
        <authorList>
            <person name="Erkel C."/>
            <person name="Kube M."/>
            <person name="Reinhardt R."/>
            <person name="Liesack W."/>
        </authorList>
    </citation>
    <scope>NUCLEOTIDE SEQUENCE [LARGE SCALE GENOMIC DNA]</scope>
    <source>
        <strain>DSM 22066 / NBRC 105507 / MRE50</strain>
    </source>
</reference>
<organism>
    <name type="scientific">Methanocella arvoryzae (strain DSM 22066 / NBRC 105507 / MRE50)</name>
    <dbReference type="NCBI Taxonomy" id="351160"/>
    <lineage>
        <taxon>Archaea</taxon>
        <taxon>Methanobacteriati</taxon>
        <taxon>Methanobacteriota</taxon>
        <taxon>Stenosarchaea group</taxon>
        <taxon>Methanomicrobia</taxon>
        <taxon>Methanocellales</taxon>
        <taxon>Methanocellaceae</taxon>
        <taxon>Methanocella</taxon>
    </lineage>
</organism>
<dbReference type="EC" id="3.1.26.4" evidence="1"/>
<dbReference type="EMBL" id="AM114193">
    <property type="protein sequence ID" value="CAJ36275.1"/>
    <property type="molecule type" value="Genomic_DNA"/>
</dbReference>
<dbReference type="RefSeq" id="WP_012036245.1">
    <property type="nucleotide sequence ID" value="NC_009464.1"/>
</dbReference>
<dbReference type="SMR" id="Q0W5R8"/>
<dbReference type="STRING" id="351160.RCIX928"/>
<dbReference type="GeneID" id="5143646"/>
<dbReference type="KEGG" id="rci:RCIX928"/>
<dbReference type="PATRIC" id="fig|351160.9.peg.1968"/>
<dbReference type="eggNOG" id="arCOG04121">
    <property type="taxonomic scope" value="Archaea"/>
</dbReference>
<dbReference type="OrthoDB" id="33866at2157"/>
<dbReference type="Proteomes" id="UP000000663">
    <property type="component" value="Chromosome"/>
</dbReference>
<dbReference type="GO" id="GO:0005737">
    <property type="term" value="C:cytoplasm"/>
    <property type="evidence" value="ECO:0007669"/>
    <property type="project" value="UniProtKB-SubCell"/>
</dbReference>
<dbReference type="GO" id="GO:0032299">
    <property type="term" value="C:ribonuclease H2 complex"/>
    <property type="evidence" value="ECO:0007669"/>
    <property type="project" value="TreeGrafter"/>
</dbReference>
<dbReference type="GO" id="GO:0030145">
    <property type="term" value="F:manganese ion binding"/>
    <property type="evidence" value="ECO:0007669"/>
    <property type="project" value="UniProtKB-UniRule"/>
</dbReference>
<dbReference type="GO" id="GO:0003723">
    <property type="term" value="F:RNA binding"/>
    <property type="evidence" value="ECO:0007669"/>
    <property type="project" value="InterPro"/>
</dbReference>
<dbReference type="GO" id="GO:0004523">
    <property type="term" value="F:RNA-DNA hybrid ribonuclease activity"/>
    <property type="evidence" value="ECO:0007669"/>
    <property type="project" value="UniProtKB-UniRule"/>
</dbReference>
<dbReference type="GO" id="GO:0043137">
    <property type="term" value="P:DNA replication, removal of RNA primer"/>
    <property type="evidence" value="ECO:0007669"/>
    <property type="project" value="TreeGrafter"/>
</dbReference>
<dbReference type="GO" id="GO:0006298">
    <property type="term" value="P:mismatch repair"/>
    <property type="evidence" value="ECO:0007669"/>
    <property type="project" value="TreeGrafter"/>
</dbReference>
<dbReference type="CDD" id="cd07180">
    <property type="entry name" value="RNase_HII_archaea_like"/>
    <property type="match status" value="1"/>
</dbReference>
<dbReference type="FunFam" id="1.10.10.460:FF:000001">
    <property type="entry name" value="Ribonuclease"/>
    <property type="match status" value="1"/>
</dbReference>
<dbReference type="Gene3D" id="3.30.420.10">
    <property type="entry name" value="Ribonuclease H-like superfamily/Ribonuclease H"/>
    <property type="match status" value="1"/>
</dbReference>
<dbReference type="Gene3D" id="1.10.10.460">
    <property type="entry name" value="Ribonuclease hii. Domain 2"/>
    <property type="match status" value="1"/>
</dbReference>
<dbReference type="HAMAP" id="MF_00052_A">
    <property type="entry name" value="RNase_HII_A"/>
    <property type="match status" value="1"/>
</dbReference>
<dbReference type="InterPro" id="IPR004649">
    <property type="entry name" value="RNase_H2_suA"/>
</dbReference>
<dbReference type="InterPro" id="IPR001352">
    <property type="entry name" value="RNase_HII/HIII"/>
</dbReference>
<dbReference type="InterPro" id="IPR024567">
    <property type="entry name" value="RNase_HII/HIII_dom"/>
</dbReference>
<dbReference type="InterPro" id="IPR020787">
    <property type="entry name" value="RNase_HII_arc"/>
</dbReference>
<dbReference type="InterPro" id="IPR023160">
    <property type="entry name" value="RNase_HII_hlx-loop-hlx_cap_dom"/>
</dbReference>
<dbReference type="InterPro" id="IPR012337">
    <property type="entry name" value="RNaseH-like_sf"/>
</dbReference>
<dbReference type="InterPro" id="IPR036397">
    <property type="entry name" value="RNaseH_sf"/>
</dbReference>
<dbReference type="NCBIfam" id="TIGR00729">
    <property type="entry name" value="ribonuclease HII"/>
    <property type="match status" value="1"/>
</dbReference>
<dbReference type="PANTHER" id="PTHR10954:SF23">
    <property type="entry name" value="RIBONUCLEASE"/>
    <property type="match status" value="1"/>
</dbReference>
<dbReference type="PANTHER" id="PTHR10954">
    <property type="entry name" value="RIBONUCLEASE H2 SUBUNIT A"/>
    <property type="match status" value="1"/>
</dbReference>
<dbReference type="Pfam" id="PF01351">
    <property type="entry name" value="RNase_HII"/>
    <property type="match status" value="1"/>
</dbReference>
<dbReference type="SUPFAM" id="SSF53098">
    <property type="entry name" value="Ribonuclease H-like"/>
    <property type="match status" value="1"/>
</dbReference>
<dbReference type="PROSITE" id="PS51975">
    <property type="entry name" value="RNASE_H_2"/>
    <property type="match status" value="1"/>
</dbReference>
<evidence type="ECO:0000255" key="1">
    <source>
        <dbReference type="HAMAP-Rule" id="MF_00052"/>
    </source>
</evidence>
<evidence type="ECO:0000255" key="2">
    <source>
        <dbReference type="PROSITE-ProRule" id="PRU01319"/>
    </source>
</evidence>